<comment type="catalytic activity">
    <reaction evidence="1">
        <text>tRNA(Gly) + glycine + ATP = glycyl-tRNA(Gly) + AMP + diphosphate</text>
        <dbReference type="Rhea" id="RHEA:16013"/>
        <dbReference type="Rhea" id="RHEA-COMP:9664"/>
        <dbReference type="Rhea" id="RHEA-COMP:9683"/>
        <dbReference type="ChEBI" id="CHEBI:30616"/>
        <dbReference type="ChEBI" id="CHEBI:33019"/>
        <dbReference type="ChEBI" id="CHEBI:57305"/>
        <dbReference type="ChEBI" id="CHEBI:78442"/>
        <dbReference type="ChEBI" id="CHEBI:78522"/>
        <dbReference type="ChEBI" id="CHEBI:456215"/>
        <dbReference type="EC" id="6.1.1.14"/>
    </reaction>
</comment>
<comment type="subunit">
    <text evidence="1">Tetramer of two alpha and two beta subunits.</text>
</comment>
<comment type="subcellular location">
    <subcellularLocation>
        <location evidence="1">Cytoplasm</location>
    </subcellularLocation>
</comment>
<comment type="similarity">
    <text evidence="1">Belongs to the class-II aminoacyl-tRNA synthetase family.</text>
</comment>
<feature type="chain" id="PRO_1000047517" description="Glycine--tRNA ligase alpha subunit">
    <location>
        <begin position="1"/>
        <end position="296"/>
    </location>
</feature>
<gene>
    <name evidence="1" type="primary">glyQ</name>
    <name type="ordered locus">SynWH7803_1770</name>
</gene>
<name>SYGA_SYNPW</name>
<reference key="1">
    <citation type="submission" date="2006-05" db="EMBL/GenBank/DDBJ databases">
        <authorList>
            <consortium name="Genoscope"/>
        </authorList>
    </citation>
    <scope>NUCLEOTIDE SEQUENCE [LARGE SCALE GENOMIC DNA]</scope>
    <source>
        <strain>WH7803</strain>
    </source>
</reference>
<evidence type="ECO:0000255" key="1">
    <source>
        <dbReference type="HAMAP-Rule" id="MF_00254"/>
    </source>
</evidence>
<protein>
    <recommendedName>
        <fullName evidence="1">Glycine--tRNA ligase alpha subunit</fullName>
        <ecNumber evidence="1">6.1.1.14</ecNumber>
    </recommendedName>
    <alternativeName>
        <fullName evidence="1">Glycyl-tRNA synthetase alpha subunit</fullName>
        <shortName evidence="1">GlyRS</shortName>
    </alternativeName>
</protein>
<proteinExistence type="inferred from homology"/>
<dbReference type="EC" id="6.1.1.14" evidence="1"/>
<dbReference type="EMBL" id="CT971583">
    <property type="protein sequence ID" value="CAK24196.1"/>
    <property type="molecule type" value="Genomic_DNA"/>
</dbReference>
<dbReference type="SMR" id="A5GMN1"/>
<dbReference type="STRING" id="32051.SynWH7803_1770"/>
<dbReference type="KEGG" id="syx:SynWH7803_1770"/>
<dbReference type="eggNOG" id="COG0752">
    <property type="taxonomic scope" value="Bacteria"/>
</dbReference>
<dbReference type="HOGENOM" id="CLU_057066_1_0_3"/>
<dbReference type="OrthoDB" id="9802183at2"/>
<dbReference type="Proteomes" id="UP000001566">
    <property type="component" value="Chromosome"/>
</dbReference>
<dbReference type="GO" id="GO:0005829">
    <property type="term" value="C:cytosol"/>
    <property type="evidence" value="ECO:0007669"/>
    <property type="project" value="TreeGrafter"/>
</dbReference>
<dbReference type="GO" id="GO:0005524">
    <property type="term" value="F:ATP binding"/>
    <property type="evidence" value="ECO:0007669"/>
    <property type="project" value="UniProtKB-UniRule"/>
</dbReference>
<dbReference type="GO" id="GO:0004820">
    <property type="term" value="F:glycine-tRNA ligase activity"/>
    <property type="evidence" value="ECO:0007669"/>
    <property type="project" value="UniProtKB-UniRule"/>
</dbReference>
<dbReference type="GO" id="GO:0006426">
    <property type="term" value="P:glycyl-tRNA aminoacylation"/>
    <property type="evidence" value="ECO:0007669"/>
    <property type="project" value="UniProtKB-UniRule"/>
</dbReference>
<dbReference type="CDD" id="cd00733">
    <property type="entry name" value="GlyRS_alpha_core"/>
    <property type="match status" value="1"/>
</dbReference>
<dbReference type="FunFam" id="3.30.930.10:FF:000006">
    <property type="entry name" value="Glycine--tRNA ligase alpha subunit"/>
    <property type="match status" value="1"/>
</dbReference>
<dbReference type="Gene3D" id="3.30.930.10">
    <property type="entry name" value="Bira Bifunctional Protein, Domain 2"/>
    <property type="match status" value="1"/>
</dbReference>
<dbReference type="Gene3D" id="1.20.58.180">
    <property type="entry name" value="Class II aaRS and biotin synthetases, domain 2"/>
    <property type="match status" value="1"/>
</dbReference>
<dbReference type="HAMAP" id="MF_00254">
    <property type="entry name" value="Gly_tRNA_synth_alpha"/>
    <property type="match status" value="1"/>
</dbReference>
<dbReference type="InterPro" id="IPR045864">
    <property type="entry name" value="aa-tRNA-synth_II/BPL/LPL"/>
</dbReference>
<dbReference type="InterPro" id="IPR006194">
    <property type="entry name" value="Gly-tRNA-synth_heterodimer"/>
</dbReference>
<dbReference type="InterPro" id="IPR002310">
    <property type="entry name" value="Gly-tRNA_ligase_asu"/>
</dbReference>
<dbReference type="NCBIfam" id="TIGR00388">
    <property type="entry name" value="glyQ"/>
    <property type="match status" value="1"/>
</dbReference>
<dbReference type="NCBIfam" id="NF006827">
    <property type="entry name" value="PRK09348.1"/>
    <property type="match status" value="1"/>
</dbReference>
<dbReference type="PANTHER" id="PTHR30075:SF2">
    <property type="entry name" value="GLYCINE--TRNA LIGASE, CHLOROPLASTIC_MITOCHONDRIAL 2"/>
    <property type="match status" value="1"/>
</dbReference>
<dbReference type="PANTHER" id="PTHR30075">
    <property type="entry name" value="GLYCYL-TRNA SYNTHETASE"/>
    <property type="match status" value="1"/>
</dbReference>
<dbReference type="Pfam" id="PF02091">
    <property type="entry name" value="tRNA-synt_2e"/>
    <property type="match status" value="1"/>
</dbReference>
<dbReference type="PRINTS" id="PR01044">
    <property type="entry name" value="TRNASYNTHGA"/>
</dbReference>
<dbReference type="SUPFAM" id="SSF55681">
    <property type="entry name" value="Class II aaRS and biotin synthetases"/>
    <property type="match status" value="1"/>
</dbReference>
<dbReference type="PROSITE" id="PS50861">
    <property type="entry name" value="AA_TRNA_LIGASE_II_GLYAB"/>
    <property type="match status" value="1"/>
</dbReference>
<keyword id="KW-0030">Aminoacyl-tRNA synthetase</keyword>
<keyword id="KW-0067">ATP-binding</keyword>
<keyword id="KW-0963">Cytoplasm</keyword>
<keyword id="KW-0436">Ligase</keyword>
<keyword id="KW-0547">Nucleotide-binding</keyword>
<keyword id="KW-0648">Protein biosynthesis</keyword>
<keyword id="KW-1185">Reference proteome</keyword>
<organism>
    <name type="scientific">Synechococcus sp. (strain WH7803)</name>
    <dbReference type="NCBI Taxonomy" id="32051"/>
    <lineage>
        <taxon>Bacteria</taxon>
        <taxon>Bacillati</taxon>
        <taxon>Cyanobacteriota</taxon>
        <taxon>Cyanophyceae</taxon>
        <taxon>Synechococcales</taxon>
        <taxon>Synechococcaceae</taxon>
        <taxon>Synechococcus</taxon>
    </lineage>
</organism>
<accession>A5GMN1</accession>
<sequence>MHFQDIISTLNRFWSEQGCLLLQPYDTEKGAGTMSPHTVLRAIGPEPWAVAYPEPCRRPTDGRYGDNPNRAQHYFQYQVLIKPSPDGIQETYLASLEALGIKAADHDIRFVEDNWESPTLGAWGVGWEVWLDGMEVTQFTYFQQCGGLDCKPVSIEITYGLERLAMYLQDVESIWDLSWNAQRSYGDIWLPFEKGQCHFNFEASNPERLKQLFAIYEAEATDLIAQNLPAPALDFVLKCSHTFNLLEARGVISVTERTATIGRIRTLARKVAEAWLAEREALGFPLLEPSAATAAV</sequence>